<reference key="1">
    <citation type="journal article" date="2007" name="Plant Physiol.">
        <title>Multiple roles of ADP-ribosylation factor 1 in plant cells include spatially regulated recruitment of coatomer and elements of the Golgi matrix.</title>
        <authorList>
            <person name="Matheson L.A."/>
            <person name="Hanton S.L."/>
            <person name="Rossi M."/>
            <person name="Latijnhouwers M."/>
            <person name="Stefano G."/>
            <person name="Renna L."/>
            <person name="Brandizzi F."/>
        </authorList>
    </citation>
    <scope>NUCLEOTIDE SEQUENCE [MRNA]</scope>
    <scope>INTERACTION WITH ARF1</scope>
    <scope>SUBCELLULAR LOCATION</scope>
</reference>
<reference key="2">
    <citation type="journal article" date="2000" name="Nature">
        <title>Sequence and analysis of chromosome 3 of the plant Arabidopsis thaliana.</title>
        <authorList>
            <person name="Salanoubat M."/>
            <person name="Lemcke K."/>
            <person name="Rieger M."/>
            <person name="Ansorge W."/>
            <person name="Unseld M."/>
            <person name="Fartmann B."/>
            <person name="Valle G."/>
            <person name="Bloecker H."/>
            <person name="Perez-Alonso M."/>
            <person name="Obermaier B."/>
            <person name="Delseny M."/>
            <person name="Boutry M."/>
            <person name="Grivell L.A."/>
            <person name="Mache R."/>
            <person name="Puigdomenech P."/>
            <person name="De Simone V."/>
            <person name="Choisne N."/>
            <person name="Artiguenave F."/>
            <person name="Robert C."/>
            <person name="Brottier P."/>
            <person name="Wincker P."/>
            <person name="Cattolico L."/>
            <person name="Weissenbach J."/>
            <person name="Saurin W."/>
            <person name="Quetier F."/>
            <person name="Schaefer M."/>
            <person name="Mueller-Auer S."/>
            <person name="Gabel C."/>
            <person name="Fuchs M."/>
            <person name="Benes V."/>
            <person name="Wurmbach E."/>
            <person name="Drzonek H."/>
            <person name="Erfle H."/>
            <person name="Jordan N."/>
            <person name="Bangert S."/>
            <person name="Wiedelmann R."/>
            <person name="Kranz H."/>
            <person name="Voss H."/>
            <person name="Holland R."/>
            <person name="Brandt P."/>
            <person name="Nyakatura G."/>
            <person name="Vezzi A."/>
            <person name="D'Angelo M."/>
            <person name="Pallavicini A."/>
            <person name="Toppo S."/>
            <person name="Simionati B."/>
            <person name="Conrad A."/>
            <person name="Hornischer K."/>
            <person name="Kauer G."/>
            <person name="Loehnert T.-H."/>
            <person name="Nordsiek G."/>
            <person name="Reichelt J."/>
            <person name="Scharfe M."/>
            <person name="Schoen O."/>
            <person name="Bargues M."/>
            <person name="Terol J."/>
            <person name="Climent J."/>
            <person name="Navarro P."/>
            <person name="Collado C."/>
            <person name="Perez-Perez A."/>
            <person name="Ottenwaelder B."/>
            <person name="Duchemin D."/>
            <person name="Cooke R."/>
            <person name="Laudie M."/>
            <person name="Berger-Llauro C."/>
            <person name="Purnelle B."/>
            <person name="Masuy D."/>
            <person name="de Haan M."/>
            <person name="Maarse A.C."/>
            <person name="Alcaraz J.-P."/>
            <person name="Cottet A."/>
            <person name="Casacuberta E."/>
            <person name="Monfort A."/>
            <person name="Argiriou A."/>
            <person name="Flores M."/>
            <person name="Liguori R."/>
            <person name="Vitale D."/>
            <person name="Mannhaupt G."/>
            <person name="Haase D."/>
            <person name="Schoof H."/>
            <person name="Rudd S."/>
            <person name="Zaccaria P."/>
            <person name="Mewes H.-W."/>
            <person name="Mayer K.F.X."/>
            <person name="Kaul S."/>
            <person name="Town C.D."/>
            <person name="Koo H.L."/>
            <person name="Tallon L.J."/>
            <person name="Jenkins J."/>
            <person name="Rooney T."/>
            <person name="Rizzo M."/>
            <person name="Walts A."/>
            <person name="Utterback T."/>
            <person name="Fujii C.Y."/>
            <person name="Shea T.P."/>
            <person name="Creasy T.H."/>
            <person name="Haas B."/>
            <person name="Maiti R."/>
            <person name="Wu D."/>
            <person name="Peterson J."/>
            <person name="Van Aken S."/>
            <person name="Pai G."/>
            <person name="Militscher J."/>
            <person name="Sellers P."/>
            <person name="Gill J.E."/>
            <person name="Feldblyum T.V."/>
            <person name="Preuss D."/>
            <person name="Lin X."/>
            <person name="Nierman W.C."/>
            <person name="Salzberg S.L."/>
            <person name="White O."/>
            <person name="Venter J.C."/>
            <person name="Fraser C.M."/>
            <person name="Kaneko T."/>
            <person name="Nakamura Y."/>
            <person name="Sato S."/>
            <person name="Kato T."/>
            <person name="Asamizu E."/>
            <person name="Sasamoto S."/>
            <person name="Kimura T."/>
            <person name="Idesawa K."/>
            <person name="Kawashima K."/>
            <person name="Kishida Y."/>
            <person name="Kiyokawa C."/>
            <person name="Kohara M."/>
            <person name="Matsumoto M."/>
            <person name="Matsuno A."/>
            <person name="Muraki A."/>
            <person name="Nakayama S."/>
            <person name="Nakazaki N."/>
            <person name="Shinpo S."/>
            <person name="Takeuchi C."/>
            <person name="Wada T."/>
            <person name="Watanabe A."/>
            <person name="Yamada M."/>
            <person name="Yasuda M."/>
            <person name="Tabata S."/>
        </authorList>
    </citation>
    <scope>NUCLEOTIDE SEQUENCE [LARGE SCALE GENOMIC DNA]</scope>
    <source>
        <strain>cv. Columbia</strain>
    </source>
</reference>
<reference key="3">
    <citation type="journal article" date="2017" name="Plant J.">
        <title>Araport11: a complete reannotation of the Arabidopsis thaliana reference genome.</title>
        <authorList>
            <person name="Cheng C.Y."/>
            <person name="Krishnakumar V."/>
            <person name="Chan A.P."/>
            <person name="Thibaud-Nissen F."/>
            <person name="Schobel S."/>
            <person name="Town C.D."/>
        </authorList>
    </citation>
    <scope>GENOME REANNOTATION</scope>
    <source>
        <strain>cv. Columbia</strain>
    </source>
</reference>
<reference key="4">
    <citation type="journal article" date="2003" name="Science">
        <title>Empirical analysis of transcriptional activity in the Arabidopsis genome.</title>
        <authorList>
            <person name="Yamada K."/>
            <person name="Lim J."/>
            <person name="Dale J.M."/>
            <person name="Chen H."/>
            <person name="Shinn P."/>
            <person name="Palm C.J."/>
            <person name="Southwick A.M."/>
            <person name="Wu H.C."/>
            <person name="Kim C.J."/>
            <person name="Nguyen M."/>
            <person name="Pham P.K."/>
            <person name="Cheuk R.F."/>
            <person name="Karlin-Newmann G."/>
            <person name="Liu S.X."/>
            <person name="Lam B."/>
            <person name="Sakano H."/>
            <person name="Wu T."/>
            <person name="Yu G."/>
            <person name="Miranda M."/>
            <person name="Quach H.L."/>
            <person name="Tripp M."/>
            <person name="Chang C.H."/>
            <person name="Lee J.M."/>
            <person name="Toriumi M.J."/>
            <person name="Chan M.M."/>
            <person name="Tang C.C."/>
            <person name="Onodera C.S."/>
            <person name="Deng J.M."/>
            <person name="Akiyama K."/>
            <person name="Ansari Y."/>
            <person name="Arakawa T."/>
            <person name="Banh J."/>
            <person name="Banno F."/>
            <person name="Bowser L."/>
            <person name="Brooks S.Y."/>
            <person name="Carninci P."/>
            <person name="Chao Q."/>
            <person name="Choy N."/>
            <person name="Enju A."/>
            <person name="Goldsmith A.D."/>
            <person name="Gurjal M."/>
            <person name="Hansen N.F."/>
            <person name="Hayashizaki Y."/>
            <person name="Johnson-Hopson C."/>
            <person name="Hsuan V.W."/>
            <person name="Iida K."/>
            <person name="Karnes M."/>
            <person name="Khan S."/>
            <person name="Koesema E."/>
            <person name="Ishida J."/>
            <person name="Jiang P.X."/>
            <person name="Jones T."/>
            <person name="Kawai J."/>
            <person name="Kamiya A."/>
            <person name="Meyers C."/>
            <person name="Nakajima M."/>
            <person name="Narusaka M."/>
            <person name="Seki M."/>
            <person name="Sakurai T."/>
            <person name="Satou M."/>
            <person name="Tamse R."/>
            <person name="Vaysberg M."/>
            <person name="Wallender E.K."/>
            <person name="Wong C."/>
            <person name="Yamamura Y."/>
            <person name="Yuan S."/>
            <person name="Shinozaki K."/>
            <person name="Davis R.W."/>
            <person name="Theologis A."/>
            <person name="Ecker J.R."/>
        </authorList>
    </citation>
    <scope>NUCLEOTIDE SEQUENCE [LARGE SCALE MRNA]</scope>
    <source>
        <strain>cv. Columbia</strain>
    </source>
</reference>
<reference key="5">
    <citation type="submission" date="2006-07" db="EMBL/GenBank/DDBJ databases">
        <title>Large-scale analysis of RIKEN Arabidopsis full-length (RAFL) cDNAs.</title>
        <authorList>
            <person name="Totoki Y."/>
            <person name="Seki M."/>
            <person name="Ishida J."/>
            <person name="Nakajima M."/>
            <person name="Enju A."/>
            <person name="Kamiya A."/>
            <person name="Narusaka M."/>
            <person name="Shin-i T."/>
            <person name="Nakagawa M."/>
            <person name="Sakamoto N."/>
            <person name="Oishi K."/>
            <person name="Kohara Y."/>
            <person name="Kobayashi M."/>
            <person name="Toyoda A."/>
            <person name="Sakaki Y."/>
            <person name="Sakurai T."/>
            <person name="Iida K."/>
            <person name="Akiyama K."/>
            <person name="Satou M."/>
            <person name="Toyoda T."/>
            <person name="Konagaya A."/>
            <person name="Carninci P."/>
            <person name="Kawai J."/>
            <person name="Hayashizaki Y."/>
            <person name="Shinozaki K."/>
        </authorList>
    </citation>
    <scope>NUCLEOTIDE SEQUENCE [LARGE SCALE MRNA]</scope>
    <source>
        <strain>cv. Columbia</strain>
    </source>
</reference>
<reference key="6">
    <citation type="journal article" date="2007" name="J. Exp. Bot.">
        <title>Localization and domain characterization of Arabidopsis golgin candidates.</title>
        <authorList>
            <person name="Latijnhouwers M."/>
            <person name="Gillespie T."/>
            <person name="Boevink P."/>
            <person name="Kriechbaumer V."/>
            <person name="Hawes C."/>
            <person name="Carvalho C.M."/>
        </authorList>
    </citation>
    <scope>SUBCELLULAR LOCATION</scope>
    <scope>GENE FAMILY</scope>
    <scope>NOMENCLATURE</scope>
</reference>
<dbReference type="EMBL" id="EU249332">
    <property type="protein sequence ID" value="ABY67252.1"/>
    <property type="molecule type" value="mRNA"/>
</dbReference>
<dbReference type="EMBL" id="AL132962">
    <property type="protein sequence ID" value="CAB71087.1"/>
    <property type="status" value="ALT_INIT"/>
    <property type="molecule type" value="Genomic_DNA"/>
</dbReference>
<dbReference type="EMBL" id="CP002686">
    <property type="protein sequence ID" value="AEE80224.1"/>
    <property type="molecule type" value="Genomic_DNA"/>
</dbReference>
<dbReference type="EMBL" id="BT002756">
    <property type="protein sequence ID" value="AAO22585.1"/>
    <property type="molecule type" value="mRNA"/>
</dbReference>
<dbReference type="EMBL" id="AK226722">
    <property type="protein sequence ID" value="BAE98827.1"/>
    <property type="molecule type" value="mRNA"/>
</dbReference>
<dbReference type="PIR" id="T47949">
    <property type="entry name" value="T47949"/>
</dbReference>
<dbReference type="RefSeq" id="NP_191716.2">
    <property type="nucleotide sequence ID" value="NM_116022.5"/>
</dbReference>
<dbReference type="SMR" id="Q84WU4"/>
<dbReference type="BioGRID" id="10644">
    <property type="interactions" value="1"/>
</dbReference>
<dbReference type="FunCoup" id="Q84WU4">
    <property type="interactions" value="320"/>
</dbReference>
<dbReference type="STRING" id="3702.Q84WU4"/>
<dbReference type="iPTMnet" id="Q84WU4"/>
<dbReference type="PaxDb" id="3702-AT3G61570.1"/>
<dbReference type="ProteomicsDB" id="248439"/>
<dbReference type="EnsemblPlants" id="AT3G61570.1">
    <property type="protein sequence ID" value="AT3G61570.1"/>
    <property type="gene ID" value="AT3G61570"/>
</dbReference>
<dbReference type="GeneID" id="825330"/>
<dbReference type="Gramene" id="AT3G61570.1">
    <property type="protein sequence ID" value="AT3G61570.1"/>
    <property type="gene ID" value="AT3G61570"/>
</dbReference>
<dbReference type="KEGG" id="ath:AT3G61570"/>
<dbReference type="Araport" id="AT3G61570"/>
<dbReference type="TAIR" id="AT3G61570">
    <property type="gene designation" value="GDAP1"/>
</dbReference>
<dbReference type="eggNOG" id="ENOG502QSWR">
    <property type="taxonomic scope" value="Eukaryota"/>
</dbReference>
<dbReference type="HOGENOM" id="CLU_023485_1_0_1"/>
<dbReference type="InParanoid" id="Q84WU4"/>
<dbReference type="OrthoDB" id="71227at2759"/>
<dbReference type="PhylomeDB" id="Q84WU4"/>
<dbReference type="PRO" id="PR:Q84WU4"/>
<dbReference type="Proteomes" id="UP000006548">
    <property type="component" value="Chromosome 3"/>
</dbReference>
<dbReference type="ExpressionAtlas" id="Q84WU4">
    <property type="expression patterns" value="baseline and differential"/>
</dbReference>
<dbReference type="GO" id="GO:0005768">
    <property type="term" value="C:endosome"/>
    <property type="evidence" value="ECO:0007669"/>
    <property type="project" value="UniProtKB-SubCell"/>
</dbReference>
<dbReference type="GO" id="GO:0005794">
    <property type="term" value="C:Golgi apparatus"/>
    <property type="evidence" value="ECO:0000314"/>
    <property type="project" value="TAIR"/>
</dbReference>
<dbReference type="GO" id="GO:0007030">
    <property type="term" value="P:Golgi organization"/>
    <property type="evidence" value="ECO:0000250"/>
    <property type="project" value="TAIR"/>
</dbReference>
<dbReference type="PANTHER" id="PTHR18921">
    <property type="entry name" value="MYOSIN HEAVY CHAIN - RELATED"/>
    <property type="match status" value="1"/>
</dbReference>
<dbReference type="PANTHER" id="PTHR18921:SF2">
    <property type="entry name" value="THYROID RECEPTOR-INTERACTING PROTEIN 11"/>
    <property type="match status" value="1"/>
</dbReference>
<keyword id="KW-0175">Coiled coil</keyword>
<keyword id="KW-0967">Endosome</keyword>
<keyword id="KW-0333">Golgi apparatus</keyword>
<keyword id="KW-1185">Reference proteome</keyword>
<accession>Q84WU4</accession>
<accession>Q9M311</accession>
<name>GOGC3_ARATH</name>
<proteinExistence type="evidence at protein level"/>
<protein>
    <recommendedName>
        <fullName>Golgin candidate 3</fullName>
        <shortName>AtGC3</shortName>
    </recommendedName>
    <alternativeName>
        <fullName>GRIP-related ARF-binding domain-containing Arabidopsis protein 1</fullName>
    </alternativeName>
</protein>
<comment type="function">
    <text>Golgi matrix protein playing a role in tethering of vesicles to Golgi membranes and in maintaining the overall structure of the Golgi apparatus.</text>
</comment>
<comment type="subunit">
    <text evidence="3">Interacts with ARF1; preferentially with the active form of the protein.</text>
</comment>
<comment type="subcellular location">
    <subcellularLocation>
        <location>Golgi apparatus</location>
    </subcellularLocation>
    <subcellularLocation>
        <location>Endosome</location>
    </subcellularLocation>
</comment>
<comment type="domain">
    <text>The C-terminal domain (551-712) is responsible for the Golgi localization.</text>
</comment>
<comment type="sequence caution" evidence="4">
    <conflict type="erroneous initiation">
        <sequence resource="EMBL-CDS" id="CAB71087"/>
    </conflict>
</comment>
<sequence>MWSSIENMKANLHKIVLDVHEDDEEEDDLHKYGSANGVSNSDRRNSSGFRSVSRYSISNGIESPAHHEIERYKAEIKKLQESESDIKALSVNYAALLREKEDQISRLNQENGSLKQNLTSTSAALKEARTDISRGSNNYAIKGNNDQSPNRLHKSVSHLKSPNHMSNGKGKDTDSFIKEKDLADMLEDRTKSMAAVQATELAKEREKLRDFQLSLQEERKRSESFKEELESMRLDKNKTSMEISKMRSELDAKLLEIKHLQMKLTGQESHAIGPGMEHLKEVNKALEKENNELKLKRSELEAALEESRKLTNSKVFPDATESLTRHPSTLDKEKPESFPGKEEMEQSLQRLEMDLKETQRERDKARQELKRLKQHLLEKETEESEKMDEDSRLIEELRQTNEYQRSQISHLEKSLKQAISNQEDNRLSNDNQIRKLKDTVDDLNQKLTNCLRTIESKNVELLNLQTALGQYYAEIEAKEHFERELAMAKDELMKLSARLKDSDERLESSNKEKEDVTSKLLHAEKVAAEWKNRVTKVEEDNAKVRRVLEQSMTRLNRMSMESDYLVDRRIVIKLLVTYFQKNHNKEVLDLMVRMLGFSEEDKERIGAAKQGGGKGVVRGVLGFPGRFVGGILGGKSAELHANAASDNQSFADLWVDFLLKDAEERERREAEEAAASKAKQDSERTRQEAALHDSEFSTVPLRSSESNQRLSR</sequence>
<gene>
    <name type="primary">GC3</name>
    <name type="synonym">GDAP1</name>
    <name type="ordered locus">At3g61570</name>
    <name type="ORF">F2A19.170</name>
</gene>
<organism>
    <name type="scientific">Arabidopsis thaliana</name>
    <name type="common">Mouse-ear cress</name>
    <dbReference type="NCBI Taxonomy" id="3702"/>
    <lineage>
        <taxon>Eukaryota</taxon>
        <taxon>Viridiplantae</taxon>
        <taxon>Streptophyta</taxon>
        <taxon>Embryophyta</taxon>
        <taxon>Tracheophyta</taxon>
        <taxon>Spermatophyta</taxon>
        <taxon>Magnoliopsida</taxon>
        <taxon>eudicotyledons</taxon>
        <taxon>Gunneridae</taxon>
        <taxon>Pentapetalae</taxon>
        <taxon>rosids</taxon>
        <taxon>malvids</taxon>
        <taxon>Brassicales</taxon>
        <taxon>Brassicaceae</taxon>
        <taxon>Camelineae</taxon>
        <taxon>Arabidopsis</taxon>
    </lineage>
</organism>
<evidence type="ECO:0000255" key="1"/>
<evidence type="ECO:0000256" key="2">
    <source>
        <dbReference type="SAM" id="MobiDB-lite"/>
    </source>
</evidence>
<evidence type="ECO:0000269" key="3">
    <source>
    </source>
</evidence>
<evidence type="ECO:0000305" key="4"/>
<feature type="chain" id="PRO_0000348537" description="Golgin candidate 3">
    <location>
        <begin position="1"/>
        <end position="712"/>
    </location>
</feature>
<feature type="domain" description="GRIP">
    <location>
        <begin position="557"/>
        <end position="608"/>
    </location>
</feature>
<feature type="region of interest" description="Disordered" evidence="2">
    <location>
        <begin position="23"/>
        <end position="49"/>
    </location>
</feature>
<feature type="region of interest" description="Disordered" evidence="2">
    <location>
        <begin position="135"/>
        <end position="176"/>
    </location>
</feature>
<feature type="region of interest" description="Disordered" evidence="2">
    <location>
        <begin position="306"/>
        <end position="347"/>
    </location>
</feature>
<feature type="region of interest" description="Disordered" evidence="2">
    <location>
        <begin position="666"/>
        <end position="712"/>
    </location>
</feature>
<feature type="coiled-coil region" evidence="1">
    <location>
        <begin position="65"/>
        <end position="134"/>
    </location>
</feature>
<feature type="coiled-coil region" evidence="1">
    <location>
        <begin position="197"/>
        <end position="313"/>
    </location>
</feature>
<feature type="coiled-coil region" evidence="1">
    <location>
        <begin position="340"/>
        <end position="558"/>
    </location>
</feature>
<feature type="coiled-coil region" evidence="1">
    <location>
        <begin position="659"/>
        <end position="690"/>
    </location>
</feature>
<feature type="compositionally biased region" description="Polar residues" evidence="2">
    <location>
        <begin position="36"/>
        <end position="49"/>
    </location>
</feature>
<feature type="compositionally biased region" description="Polar residues" evidence="2">
    <location>
        <begin position="135"/>
        <end position="150"/>
    </location>
</feature>
<feature type="compositionally biased region" description="Basic and acidic residues" evidence="2">
    <location>
        <begin position="328"/>
        <end position="344"/>
    </location>
</feature>
<feature type="compositionally biased region" description="Basic and acidic residues" evidence="2">
    <location>
        <begin position="678"/>
        <end position="695"/>
    </location>
</feature>
<feature type="compositionally biased region" description="Polar residues" evidence="2">
    <location>
        <begin position="696"/>
        <end position="712"/>
    </location>
</feature>